<organism>
    <name type="scientific">Ceratogyrus marshalli</name>
    <name type="common">Straighthorned baboon tarantula</name>
    <name type="synonym">Ceratogyrus cornuatus</name>
    <dbReference type="NCBI Taxonomy" id="316287"/>
    <lineage>
        <taxon>Eukaryota</taxon>
        <taxon>Metazoa</taxon>
        <taxon>Ecdysozoa</taxon>
        <taxon>Arthropoda</taxon>
        <taxon>Chelicerata</taxon>
        <taxon>Arachnida</taxon>
        <taxon>Araneae</taxon>
        <taxon>Mygalomorphae</taxon>
        <taxon>Theraphosidae</taxon>
        <taxon>Ceratogyrus</taxon>
    </lineage>
</organism>
<keyword id="KW-0027">Amidation</keyword>
<keyword id="KW-0903">Direct protein sequencing</keyword>
<keyword id="KW-1015">Disulfide bond</keyword>
<keyword id="KW-0872">Ion channel impairing toxin</keyword>
<keyword id="KW-0960">Knottin</keyword>
<keyword id="KW-0528">Neurotoxin</keyword>
<keyword id="KW-0964">Secreted</keyword>
<keyword id="KW-0800">Toxin</keyword>
<keyword id="KW-0738">Voltage-gated sodium channel impairing toxin</keyword>
<evidence type="ECO:0000250" key="1">
    <source>
        <dbReference type="UniProtKB" id="P56855"/>
    </source>
</evidence>
<evidence type="ECO:0000269" key="2">
    <source>
    </source>
</evidence>
<evidence type="ECO:0000303" key="3">
    <source>
    </source>
</evidence>
<evidence type="ECO:0000305" key="4"/>
<evidence type="ECO:0000305" key="5">
    <source>
    </source>
</evidence>
<dbReference type="SMR" id="P84509"/>
<dbReference type="ArachnoServer" id="AS000272">
    <property type="toxin name" value="beta-theraphotoxin-Cm2a"/>
</dbReference>
<dbReference type="GO" id="GO:0005615">
    <property type="term" value="C:extracellular space"/>
    <property type="evidence" value="ECO:0000314"/>
    <property type="project" value="UniProtKB"/>
</dbReference>
<dbReference type="GO" id="GO:0019871">
    <property type="term" value="F:sodium channel inhibitor activity"/>
    <property type="evidence" value="ECO:0000314"/>
    <property type="project" value="UniProtKB"/>
</dbReference>
<dbReference type="GO" id="GO:0090729">
    <property type="term" value="F:toxin activity"/>
    <property type="evidence" value="ECO:0000314"/>
    <property type="project" value="UniProtKB"/>
</dbReference>
<dbReference type="GO" id="GO:0044493">
    <property type="term" value="P:envenomation resulting in negative regulation of voltage-gated sodium channel activity in another organism"/>
    <property type="evidence" value="ECO:0000314"/>
    <property type="project" value="UniProtKB"/>
</dbReference>
<dbReference type="InterPro" id="IPR011696">
    <property type="entry name" value="Huwentoxin-1"/>
</dbReference>
<dbReference type="Pfam" id="PF07740">
    <property type="entry name" value="Toxin_12"/>
    <property type="match status" value="1"/>
</dbReference>
<dbReference type="SUPFAM" id="SSF57059">
    <property type="entry name" value="omega toxin-like"/>
    <property type="match status" value="1"/>
</dbReference>
<reference key="1">
    <citation type="journal article" date="2006" name="Mol. Pharmacol.">
        <title>Four novel tarantula toxins as selective modulators of voltage-gated sodium channel subtypes.</title>
        <authorList>
            <person name="Bosmans F."/>
            <person name="Rash L."/>
            <person name="Zhu S."/>
            <person name="Diochot S."/>
            <person name="Lazdunski M."/>
            <person name="Escoubas P."/>
            <person name="Tytgat J."/>
        </authorList>
    </citation>
    <scope>PROTEIN SEQUENCE</scope>
    <scope>FUNCTION</scope>
    <scope>BIOASSAY</scope>
    <scope>SUBCELLULAR LOCATION</scope>
    <scope>MASS SPECTROMETRY</scope>
    <scope>AMIDATION AT PHE-39</scope>
    <source>
        <tissue>Venom</tissue>
    </source>
</reference>
<name>TX3_CERMR</name>
<comment type="function">
    <text evidence="2">Inhibits mammalian voltage-gated sodium channel subtypes Nav1.5/SCN5A and Nav1.8/SCN10A by shifting the voltage dependence of channel activation to more depolarized potentials and by blocking the inward component of the sodium current. In vivo, this toxin causes erect, elevated tail, initial partial ataxia, followed by recovery over approximately 1 hour after injection and the progressive development of shaking. Although paralysis subsides, the body tremors never cease and persist until the end of the experiment.</text>
</comment>
<comment type="subcellular location">
    <subcellularLocation>
        <location evidence="2">Secreted</location>
    </subcellularLocation>
</comment>
<comment type="tissue specificity">
    <text evidence="5">Expressed by the venom gland.</text>
</comment>
<comment type="domain">
    <text evidence="1">The presence of a 'disulfide through disulfide knot' structurally defines this protein as a knottin.</text>
</comment>
<comment type="mass spectrometry" mass="4321.84" method="MALDI" evidence="2"/>
<comment type="similarity">
    <text evidence="4">Belongs to the neurotoxin 10 (Hwtx-1) family. 47 subfamily.</text>
</comment>
<sequence length="39" mass="4332">GVDKEGCRKLLGGCTIDDDCCPHLGCNKKYWHCGWDGTF</sequence>
<proteinExistence type="evidence at protein level"/>
<protein>
    <recommendedName>
        <fullName>Beta-theraphotoxin-Cm2a</fullName>
        <shortName>Beta-TRTX-Cm2a</shortName>
    </recommendedName>
    <alternativeName>
        <fullName evidence="3">Ceratotoxin-3</fullName>
        <shortName evidence="3">CcoTx3</shortName>
    </alternativeName>
</protein>
<accession>P84509</accession>
<feature type="peptide" id="PRO_0000045002" description="Beta-theraphotoxin-Cm2a" evidence="2">
    <location>
        <begin position="1"/>
        <end position="39"/>
    </location>
</feature>
<feature type="modified residue" description="Phenylalanine amide" evidence="2">
    <location>
        <position position="39"/>
    </location>
</feature>
<feature type="disulfide bond" evidence="1">
    <location>
        <begin position="7"/>
        <end position="21"/>
    </location>
</feature>
<feature type="disulfide bond" evidence="1">
    <location>
        <begin position="14"/>
        <end position="26"/>
    </location>
</feature>
<feature type="disulfide bond" evidence="1">
    <location>
        <begin position="20"/>
        <end position="33"/>
    </location>
</feature>